<organism>
    <name type="scientific">Arabidopsis thaliana</name>
    <name type="common">Mouse-ear cress</name>
    <dbReference type="NCBI Taxonomy" id="3702"/>
    <lineage>
        <taxon>Eukaryota</taxon>
        <taxon>Viridiplantae</taxon>
        <taxon>Streptophyta</taxon>
        <taxon>Embryophyta</taxon>
        <taxon>Tracheophyta</taxon>
        <taxon>Spermatophyta</taxon>
        <taxon>Magnoliopsida</taxon>
        <taxon>eudicotyledons</taxon>
        <taxon>Gunneridae</taxon>
        <taxon>Pentapetalae</taxon>
        <taxon>rosids</taxon>
        <taxon>malvids</taxon>
        <taxon>Brassicales</taxon>
        <taxon>Brassicaceae</taxon>
        <taxon>Camelineae</taxon>
        <taxon>Arabidopsis</taxon>
    </lineage>
</organism>
<name>BAG7_ARATH</name>
<gene>
    <name type="primary">BAG7</name>
    <name type="ordered locus">At5g62390</name>
    <name type="ORF">MMI9.22</name>
</gene>
<sequence length="446" mass="51567">MTLFHRLDLIDPYTCTPLIVRETSIVEPSSLFLGFPSFIDEDIEDLFEFSSPNPLDLFETVTDLVKIKKSPSSCKYKVIRRRLEPEYPLKYLCDRVSDLESKFDRLVSPKSDRKYTLTKEIKGSGERKYKWEAEIQGPLERKYKLEAEIEGSGERKYRWTTEIKGGKKDEEGLKLAALKKEKAKAKAIAAAEAEKKKNKNKKKSYNWTTEVKSERENGEVSHTYIIKATTGGEKKKKHEEKEKKEKIETKSKKKEKTRVVVIEEEEEEDDESSEHGAIVLRKAFSRRNGAVRTKKGKNKEMPPEYAAVMIQRAFKAYLIRRSKSLRALRDLAIAKTKLKELRASFHNFSYRRLIARDGEERQKFSEKIIVLLLTVDAIEGVDVMVRGAKRSMVDELEAMLDVVDPQPQGKSLSMRRRTFDMPDSLIRKEIAEGVTQIVQMLETEEE</sequence>
<feature type="chain" id="PRO_0000415527" description="BAG family molecular chaperone regulator 7">
    <location>
        <begin position="1"/>
        <end position="446"/>
    </location>
</feature>
<feature type="domain" description="IQ" evidence="2">
    <location>
        <begin position="303"/>
        <end position="332"/>
    </location>
</feature>
<feature type="domain" description="BAG">
    <location>
        <begin position="330"/>
        <end position="407"/>
    </location>
</feature>
<feature type="region of interest" description="Disordered" evidence="3">
    <location>
        <begin position="230"/>
        <end position="252"/>
    </location>
</feature>
<feature type="compositionally biased region" description="Basic and acidic residues" evidence="3">
    <location>
        <begin position="239"/>
        <end position="250"/>
    </location>
</feature>
<feature type="modified residue" description="Phosphothreonine" evidence="5">
    <location>
        <position position="443"/>
    </location>
</feature>
<proteinExistence type="evidence at protein level"/>
<protein>
    <recommendedName>
        <fullName>BAG family molecular chaperone regulator 7</fullName>
    </recommendedName>
    <alternativeName>
        <fullName>Bcl-2-associated athanogene 7</fullName>
    </alternativeName>
</protein>
<comment type="function">
    <text evidence="4">Co-chaperone that regulates diverse cellular pathways, such as programmed cell death and stress responses. Necessary for the proper maintenance of the unfolded protein response (UPR) during heat and cold tolerance.</text>
</comment>
<comment type="subunit">
    <text evidence="1 4">Binds to the ATPase domain of HSP70/HSC70 chaperones (By similarity). Interacts with HSP70-11/BIP2.</text>
</comment>
<comment type="subcellular location">
    <subcellularLocation>
        <location evidence="4">Endoplasmic reticulum</location>
    </subcellularLocation>
</comment>
<comment type="domain">
    <text evidence="1">IQ domain mediates interaction with calmodulin.</text>
</comment>
<comment type="disruption phenotype">
    <text evidence="4">Susceptibility to heat and cold stress.</text>
</comment>
<accession>Q9LVA0</accession>
<dbReference type="EMBL" id="AB019235">
    <property type="protein sequence ID" value="BAA97203.1"/>
    <property type="molecule type" value="Genomic_DNA"/>
</dbReference>
<dbReference type="EMBL" id="CP002688">
    <property type="protein sequence ID" value="AED97603.1"/>
    <property type="molecule type" value="Genomic_DNA"/>
</dbReference>
<dbReference type="EMBL" id="AY093078">
    <property type="protein sequence ID" value="AAM13077.1"/>
    <property type="molecule type" value="mRNA"/>
</dbReference>
<dbReference type="EMBL" id="AY128766">
    <property type="protein sequence ID" value="AAM91166.1"/>
    <property type="molecule type" value="mRNA"/>
</dbReference>
<dbReference type="RefSeq" id="NP_201045.1">
    <property type="nucleotide sequence ID" value="NM_125633.5"/>
</dbReference>
<dbReference type="SMR" id="Q9LVA0"/>
<dbReference type="BioGRID" id="21604">
    <property type="interactions" value="6"/>
</dbReference>
<dbReference type="FunCoup" id="Q9LVA0">
    <property type="interactions" value="1447"/>
</dbReference>
<dbReference type="IntAct" id="Q9LVA0">
    <property type="interactions" value="1"/>
</dbReference>
<dbReference type="STRING" id="3702.Q9LVA0"/>
<dbReference type="iPTMnet" id="Q9LVA0"/>
<dbReference type="MetOSite" id="Q9LVA0"/>
<dbReference type="PaxDb" id="3702-AT5G62390.1"/>
<dbReference type="ProteomicsDB" id="240712"/>
<dbReference type="EnsemblPlants" id="AT5G62390.1">
    <property type="protein sequence ID" value="AT5G62390.1"/>
    <property type="gene ID" value="AT5G62390"/>
</dbReference>
<dbReference type="GeneID" id="836360"/>
<dbReference type="Gramene" id="AT5G62390.1">
    <property type="protein sequence ID" value="AT5G62390.1"/>
    <property type="gene ID" value="AT5G62390"/>
</dbReference>
<dbReference type="KEGG" id="ath:AT5G62390"/>
<dbReference type="Araport" id="AT5G62390"/>
<dbReference type="TAIR" id="AT5G62390">
    <property type="gene designation" value="BAG7"/>
</dbReference>
<dbReference type="eggNOG" id="ENOG502QRXB">
    <property type="taxonomic scope" value="Eukaryota"/>
</dbReference>
<dbReference type="HOGENOM" id="CLU_038879_2_0_1"/>
<dbReference type="InParanoid" id="Q9LVA0"/>
<dbReference type="OMA" id="SPSSCKY"/>
<dbReference type="OrthoDB" id="747353at2759"/>
<dbReference type="PhylomeDB" id="Q9LVA0"/>
<dbReference type="CD-CODE" id="4299E36E">
    <property type="entry name" value="Nucleolus"/>
</dbReference>
<dbReference type="PRO" id="PR:Q9LVA0"/>
<dbReference type="Proteomes" id="UP000006548">
    <property type="component" value="Chromosome 5"/>
</dbReference>
<dbReference type="ExpressionAtlas" id="Q9LVA0">
    <property type="expression patterns" value="baseline and differential"/>
</dbReference>
<dbReference type="GO" id="GO:0005783">
    <property type="term" value="C:endoplasmic reticulum"/>
    <property type="evidence" value="ECO:0000314"/>
    <property type="project" value="TAIR"/>
</dbReference>
<dbReference type="GO" id="GO:0005886">
    <property type="term" value="C:plasma membrane"/>
    <property type="evidence" value="ECO:0007005"/>
    <property type="project" value="TAIR"/>
</dbReference>
<dbReference type="GO" id="GO:0009506">
    <property type="term" value="C:plasmodesma"/>
    <property type="evidence" value="ECO:0007005"/>
    <property type="project" value="TAIR"/>
</dbReference>
<dbReference type="GO" id="GO:0009536">
    <property type="term" value="C:plastid"/>
    <property type="evidence" value="ECO:0007005"/>
    <property type="project" value="TAIR"/>
</dbReference>
<dbReference type="GO" id="GO:0005516">
    <property type="term" value="F:calmodulin binding"/>
    <property type="evidence" value="ECO:0007669"/>
    <property type="project" value="UniProtKB-KW"/>
</dbReference>
<dbReference type="GO" id="GO:0070417">
    <property type="term" value="P:cellular response to cold"/>
    <property type="evidence" value="ECO:0000315"/>
    <property type="project" value="TAIR"/>
</dbReference>
<dbReference type="GO" id="GO:0034605">
    <property type="term" value="P:cellular response to heat"/>
    <property type="evidence" value="ECO:0000315"/>
    <property type="project" value="TAIR"/>
</dbReference>
<dbReference type="GO" id="GO:0034620">
    <property type="term" value="P:cellular response to unfolded protein"/>
    <property type="evidence" value="ECO:0000315"/>
    <property type="project" value="TAIR"/>
</dbReference>
<dbReference type="GO" id="GO:0006457">
    <property type="term" value="P:protein folding"/>
    <property type="evidence" value="ECO:0000315"/>
    <property type="project" value="TAIR"/>
</dbReference>
<dbReference type="InterPro" id="IPR040400">
    <property type="entry name" value="BAG5/6/7/8"/>
</dbReference>
<dbReference type="PANTHER" id="PTHR33322">
    <property type="entry name" value="BAG DOMAIN CONTAINING PROTEIN, EXPRESSED"/>
    <property type="match status" value="1"/>
</dbReference>
<dbReference type="PANTHER" id="PTHR33322:SF3">
    <property type="entry name" value="BAG FAMILY MOLECULAR CHAPERONE REGULATOR 7"/>
    <property type="match status" value="1"/>
</dbReference>
<dbReference type="PROSITE" id="PS50096">
    <property type="entry name" value="IQ"/>
    <property type="match status" value="1"/>
</dbReference>
<keyword id="KW-0053">Apoptosis</keyword>
<keyword id="KW-0112">Calmodulin-binding</keyword>
<keyword id="KW-0143">Chaperone</keyword>
<keyword id="KW-0256">Endoplasmic reticulum</keyword>
<keyword id="KW-0597">Phosphoprotein</keyword>
<keyword id="KW-1185">Reference proteome</keyword>
<keyword id="KW-0346">Stress response</keyword>
<evidence type="ECO:0000250" key="1"/>
<evidence type="ECO:0000255" key="2">
    <source>
        <dbReference type="PROSITE-ProRule" id="PRU00116"/>
    </source>
</evidence>
<evidence type="ECO:0000256" key="3">
    <source>
        <dbReference type="SAM" id="MobiDB-lite"/>
    </source>
</evidence>
<evidence type="ECO:0000269" key="4">
    <source>
    </source>
</evidence>
<evidence type="ECO:0007744" key="5">
    <source>
    </source>
</evidence>
<reference key="1">
    <citation type="journal article" date="2000" name="DNA Res.">
        <title>Structural analysis of Arabidopsis thaliana chromosome 5. X. Sequence features of the regions of 3,076,755 bp covered by sixty P1 and TAC clones.</title>
        <authorList>
            <person name="Sato S."/>
            <person name="Nakamura Y."/>
            <person name="Kaneko T."/>
            <person name="Katoh T."/>
            <person name="Asamizu E."/>
            <person name="Kotani H."/>
            <person name="Tabata S."/>
        </authorList>
    </citation>
    <scope>NUCLEOTIDE SEQUENCE [LARGE SCALE GENOMIC DNA]</scope>
    <source>
        <strain>cv. Columbia</strain>
    </source>
</reference>
<reference key="2">
    <citation type="journal article" date="2017" name="Plant J.">
        <title>Araport11: a complete reannotation of the Arabidopsis thaliana reference genome.</title>
        <authorList>
            <person name="Cheng C.Y."/>
            <person name="Krishnakumar V."/>
            <person name="Chan A.P."/>
            <person name="Thibaud-Nissen F."/>
            <person name="Schobel S."/>
            <person name="Town C.D."/>
        </authorList>
    </citation>
    <scope>GENOME REANNOTATION</scope>
    <source>
        <strain>cv. Columbia</strain>
    </source>
</reference>
<reference key="3">
    <citation type="journal article" date="2003" name="Science">
        <title>Empirical analysis of transcriptional activity in the Arabidopsis genome.</title>
        <authorList>
            <person name="Yamada K."/>
            <person name="Lim J."/>
            <person name="Dale J.M."/>
            <person name="Chen H."/>
            <person name="Shinn P."/>
            <person name="Palm C.J."/>
            <person name="Southwick A.M."/>
            <person name="Wu H.C."/>
            <person name="Kim C.J."/>
            <person name="Nguyen M."/>
            <person name="Pham P.K."/>
            <person name="Cheuk R.F."/>
            <person name="Karlin-Newmann G."/>
            <person name="Liu S.X."/>
            <person name="Lam B."/>
            <person name="Sakano H."/>
            <person name="Wu T."/>
            <person name="Yu G."/>
            <person name="Miranda M."/>
            <person name="Quach H.L."/>
            <person name="Tripp M."/>
            <person name="Chang C.H."/>
            <person name="Lee J.M."/>
            <person name="Toriumi M.J."/>
            <person name="Chan M.M."/>
            <person name="Tang C.C."/>
            <person name="Onodera C.S."/>
            <person name="Deng J.M."/>
            <person name="Akiyama K."/>
            <person name="Ansari Y."/>
            <person name="Arakawa T."/>
            <person name="Banh J."/>
            <person name="Banno F."/>
            <person name="Bowser L."/>
            <person name="Brooks S.Y."/>
            <person name="Carninci P."/>
            <person name="Chao Q."/>
            <person name="Choy N."/>
            <person name="Enju A."/>
            <person name="Goldsmith A.D."/>
            <person name="Gurjal M."/>
            <person name="Hansen N.F."/>
            <person name="Hayashizaki Y."/>
            <person name="Johnson-Hopson C."/>
            <person name="Hsuan V.W."/>
            <person name="Iida K."/>
            <person name="Karnes M."/>
            <person name="Khan S."/>
            <person name="Koesema E."/>
            <person name="Ishida J."/>
            <person name="Jiang P.X."/>
            <person name="Jones T."/>
            <person name="Kawai J."/>
            <person name="Kamiya A."/>
            <person name="Meyers C."/>
            <person name="Nakajima M."/>
            <person name="Narusaka M."/>
            <person name="Seki M."/>
            <person name="Sakurai T."/>
            <person name="Satou M."/>
            <person name="Tamse R."/>
            <person name="Vaysberg M."/>
            <person name="Wallender E.K."/>
            <person name="Wong C."/>
            <person name="Yamamura Y."/>
            <person name="Yuan S."/>
            <person name="Shinozaki K."/>
            <person name="Davis R.W."/>
            <person name="Theologis A."/>
            <person name="Ecker J.R."/>
        </authorList>
    </citation>
    <scope>NUCLEOTIDE SEQUENCE [LARGE SCALE MRNA]</scope>
    <source>
        <strain>cv. Columbia</strain>
    </source>
</reference>
<reference key="4">
    <citation type="journal article" date="2003" name="Plant Sci.">
        <title>The BAG-family proteins in Arabidopsis thaliana.</title>
        <authorList>
            <person name="Juqiang Y."/>
            <person name="Cixin H."/>
            <person name="Hong Z."/>
        </authorList>
    </citation>
    <scope>GENE FAMILY</scope>
    <scope>NOMENCLATURE</scope>
</reference>
<reference key="5">
    <citation type="journal article" date="2006" name="J. Biol. Chem.">
        <title>Identification and functional characterization of the BAG protein family in Arabidopsis thaliana.</title>
        <authorList>
            <person name="Doukhanina E.V."/>
            <person name="Chen S."/>
            <person name="van der Zalm E."/>
            <person name="Godzik A."/>
            <person name="Reed J."/>
            <person name="Dickman M.B."/>
        </authorList>
    </citation>
    <scope>GENE FAMILY</scope>
</reference>
<reference key="6">
    <citation type="journal article" date="2009" name="Plant Physiol.">
        <title>Large-scale Arabidopsis phosphoproteome profiling reveals novel chloroplast kinase substrates and phosphorylation networks.</title>
        <authorList>
            <person name="Reiland S."/>
            <person name="Messerli G."/>
            <person name="Baerenfaller K."/>
            <person name="Gerrits B."/>
            <person name="Endler A."/>
            <person name="Grossmann J."/>
            <person name="Gruissem W."/>
            <person name="Baginsky S."/>
        </authorList>
    </citation>
    <scope>PHOSPHORYLATION [LARGE SCALE ANALYSIS] AT THR-443</scope>
    <scope>IDENTIFICATION BY MASS SPECTROMETRY [LARGE SCALE ANALYSIS]</scope>
</reference>
<reference key="7">
    <citation type="journal article" date="2010" name="Proc. Natl. Acad. Sci. U.S.A.">
        <title>AtBAG7, an Arabidopsis Bcl-2-associated athanogene, resides in the endoplasmic reticulum and is involved in the unfolded protein response.</title>
        <authorList>
            <person name="Williams B."/>
            <person name="Kabbage M."/>
            <person name="Britt R."/>
            <person name="Dickman M.B."/>
        </authorList>
    </citation>
    <scope>FUNCTION</scope>
    <scope>DISRUPTION PHENOTYPE</scope>
    <scope>SUBCELLULAR LOCATION</scope>
    <scope>INTERACTION WITH HSP70-11/BIP2</scope>
</reference>